<feature type="chain" id="PRO_0000290739" description="Undecaprenyl-diphosphatase 1">
    <location>
        <begin position="1"/>
        <end position="278"/>
    </location>
</feature>
<feature type="transmembrane region" description="Helical" evidence="1">
    <location>
        <begin position="1"/>
        <end position="21"/>
    </location>
</feature>
<feature type="transmembrane region" description="Helical" evidence="1">
    <location>
        <begin position="43"/>
        <end position="63"/>
    </location>
</feature>
<feature type="transmembrane region" description="Helical" evidence="1">
    <location>
        <begin position="83"/>
        <end position="103"/>
    </location>
</feature>
<feature type="transmembrane region" description="Helical" evidence="1">
    <location>
        <begin position="112"/>
        <end position="132"/>
    </location>
</feature>
<feature type="transmembrane region" description="Helical" evidence="1">
    <location>
        <begin position="192"/>
        <end position="212"/>
    </location>
</feature>
<feature type="transmembrane region" description="Helical" evidence="1">
    <location>
        <begin position="224"/>
        <end position="244"/>
    </location>
</feature>
<feature type="transmembrane region" description="Helical" evidence="1">
    <location>
        <begin position="257"/>
        <end position="277"/>
    </location>
</feature>
<keyword id="KW-0046">Antibiotic resistance</keyword>
<keyword id="KW-1003">Cell membrane</keyword>
<keyword id="KW-0133">Cell shape</keyword>
<keyword id="KW-0961">Cell wall biogenesis/degradation</keyword>
<keyword id="KW-0378">Hydrolase</keyword>
<keyword id="KW-0472">Membrane</keyword>
<keyword id="KW-0573">Peptidoglycan synthesis</keyword>
<keyword id="KW-1185">Reference proteome</keyword>
<keyword id="KW-0812">Transmembrane</keyword>
<keyword id="KW-1133">Transmembrane helix</keyword>
<proteinExistence type="inferred from homology"/>
<name>UPPP1_OENOB</name>
<gene>
    <name evidence="1" type="primary">uppP1</name>
    <name type="ordered locus">OEOE_0848</name>
</gene>
<protein>
    <recommendedName>
        <fullName evidence="1">Undecaprenyl-diphosphatase 1</fullName>
        <ecNumber evidence="1">3.6.1.27</ecNumber>
    </recommendedName>
    <alternativeName>
        <fullName evidence="1">Bacitracin resistance protein 1</fullName>
    </alternativeName>
    <alternativeName>
        <fullName evidence="1">Undecaprenyl pyrophosphate phosphatase 1</fullName>
    </alternativeName>
</protein>
<reference key="1">
    <citation type="journal article" date="2006" name="Proc. Natl. Acad. Sci. U.S.A.">
        <title>Comparative genomics of the lactic acid bacteria.</title>
        <authorList>
            <person name="Makarova K.S."/>
            <person name="Slesarev A."/>
            <person name="Wolf Y.I."/>
            <person name="Sorokin A."/>
            <person name="Mirkin B."/>
            <person name="Koonin E.V."/>
            <person name="Pavlov A."/>
            <person name="Pavlova N."/>
            <person name="Karamychev V."/>
            <person name="Polouchine N."/>
            <person name="Shakhova V."/>
            <person name="Grigoriev I."/>
            <person name="Lou Y."/>
            <person name="Rohksar D."/>
            <person name="Lucas S."/>
            <person name="Huang K."/>
            <person name="Goodstein D.M."/>
            <person name="Hawkins T."/>
            <person name="Plengvidhya V."/>
            <person name="Welker D."/>
            <person name="Hughes J."/>
            <person name="Goh Y."/>
            <person name="Benson A."/>
            <person name="Baldwin K."/>
            <person name="Lee J.-H."/>
            <person name="Diaz-Muniz I."/>
            <person name="Dosti B."/>
            <person name="Smeianov V."/>
            <person name="Wechter W."/>
            <person name="Barabote R."/>
            <person name="Lorca G."/>
            <person name="Altermann E."/>
            <person name="Barrangou R."/>
            <person name="Ganesan B."/>
            <person name="Xie Y."/>
            <person name="Rawsthorne H."/>
            <person name="Tamir D."/>
            <person name="Parker C."/>
            <person name="Breidt F."/>
            <person name="Broadbent J.R."/>
            <person name="Hutkins R."/>
            <person name="O'Sullivan D."/>
            <person name="Steele J."/>
            <person name="Unlu G."/>
            <person name="Saier M.H. Jr."/>
            <person name="Klaenhammer T."/>
            <person name="Richardson P."/>
            <person name="Kozyavkin S."/>
            <person name="Weimer B.C."/>
            <person name="Mills D.A."/>
        </authorList>
    </citation>
    <scope>NUCLEOTIDE SEQUENCE [LARGE SCALE GENOMIC DNA]</scope>
    <source>
        <strain>ATCC BAA-331 / PSU-1</strain>
    </source>
</reference>
<comment type="function">
    <text evidence="1">Catalyzes the dephosphorylation of undecaprenyl diphosphate (UPP). Confers resistance to bacitracin.</text>
</comment>
<comment type="catalytic activity">
    <reaction evidence="1">
        <text>di-trans,octa-cis-undecaprenyl diphosphate + H2O = di-trans,octa-cis-undecaprenyl phosphate + phosphate + H(+)</text>
        <dbReference type="Rhea" id="RHEA:28094"/>
        <dbReference type="ChEBI" id="CHEBI:15377"/>
        <dbReference type="ChEBI" id="CHEBI:15378"/>
        <dbReference type="ChEBI" id="CHEBI:43474"/>
        <dbReference type="ChEBI" id="CHEBI:58405"/>
        <dbReference type="ChEBI" id="CHEBI:60392"/>
        <dbReference type="EC" id="3.6.1.27"/>
    </reaction>
</comment>
<comment type="subcellular location">
    <subcellularLocation>
        <location evidence="1">Cell membrane</location>
        <topology evidence="1">Multi-pass membrane protein</topology>
    </subcellularLocation>
</comment>
<comment type="miscellaneous">
    <text>Bacitracin is thought to be involved in the inhibition of peptidoglycan synthesis by sequestering undecaprenyl diphosphate, thereby reducing the pool of lipid carrier available.</text>
</comment>
<comment type="similarity">
    <text evidence="1">Belongs to the UppP family.</text>
</comment>
<dbReference type="EC" id="3.6.1.27" evidence="1"/>
<dbReference type="EMBL" id="CP000411">
    <property type="protein sequence ID" value="ABJ56769.1"/>
    <property type="molecule type" value="Genomic_DNA"/>
</dbReference>
<dbReference type="RefSeq" id="WP_002818771.1">
    <property type="nucleotide sequence ID" value="NC_008528.1"/>
</dbReference>
<dbReference type="SMR" id="Q04FK3"/>
<dbReference type="STRING" id="203123.OEOE_0848"/>
<dbReference type="KEGG" id="ooe:OEOE_0848"/>
<dbReference type="eggNOG" id="COG1968">
    <property type="taxonomic scope" value="Bacteria"/>
</dbReference>
<dbReference type="HOGENOM" id="CLU_060296_2_0_9"/>
<dbReference type="Proteomes" id="UP000000774">
    <property type="component" value="Chromosome"/>
</dbReference>
<dbReference type="GO" id="GO:0005886">
    <property type="term" value="C:plasma membrane"/>
    <property type="evidence" value="ECO:0007669"/>
    <property type="project" value="UniProtKB-SubCell"/>
</dbReference>
<dbReference type="GO" id="GO:0050380">
    <property type="term" value="F:undecaprenyl-diphosphatase activity"/>
    <property type="evidence" value="ECO:0007669"/>
    <property type="project" value="UniProtKB-UniRule"/>
</dbReference>
<dbReference type="GO" id="GO:0071555">
    <property type="term" value="P:cell wall organization"/>
    <property type="evidence" value="ECO:0007669"/>
    <property type="project" value="UniProtKB-KW"/>
</dbReference>
<dbReference type="GO" id="GO:0009252">
    <property type="term" value="P:peptidoglycan biosynthetic process"/>
    <property type="evidence" value="ECO:0007669"/>
    <property type="project" value="UniProtKB-KW"/>
</dbReference>
<dbReference type="GO" id="GO:0008360">
    <property type="term" value="P:regulation of cell shape"/>
    <property type="evidence" value="ECO:0007669"/>
    <property type="project" value="UniProtKB-KW"/>
</dbReference>
<dbReference type="GO" id="GO:0046677">
    <property type="term" value="P:response to antibiotic"/>
    <property type="evidence" value="ECO:0007669"/>
    <property type="project" value="UniProtKB-UniRule"/>
</dbReference>
<dbReference type="HAMAP" id="MF_01006">
    <property type="entry name" value="Undec_diphosphatase"/>
    <property type="match status" value="1"/>
</dbReference>
<dbReference type="InterPro" id="IPR003824">
    <property type="entry name" value="UppP"/>
</dbReference>
<dbReference type="NCBIfam" id="NF001389">
    <property type="entry name" value="PRK00281.1-2"/>
    <property type="match status" value="1"/>
</dbReference>
<dbReference type="NCBIfam" id="NF001390">
    <property type="entry name" value="PRK00281.1-4"/>
    <property type="match status" value="1"/>
</dbReference>
<dbReference type="NCBIfam" id="NF001391">
    <property type="entry name" value="PRK00281.1-5"/>
    <property type="match status" value="1"/>
</dbReference>
<dbReference type="NCBIfam" id="TIGR00753">
    <property type="entry name" value="undec_PP_bacA"/>
    <property type="match status" value="1"/>
</dbReference>
<dbReference type="PANTHER" id="PTHR30622">
    <property type="entry name" value="UNDECAPRENYL-DIPHOSPHATASE"/>
    <property type="match status" value="1"/>
</dbReference>
<dbReference type="PANTHER" id="PTHR30622:SF3">
    <property type="entry name" value="UNDECAPRENYL-DIPHOSPHATASE"/>
    <property type="match status" value="1"/>
</dbReference>
<dbReference type="Pfam" id="PF02673">
    <property type="entry name" value="BacA"/>
    <property type="match status" value="1"/>
</dbReference>
<organism>
    <name type="scientific">Oenococcus oeni (strain ATCC BAA-331 / PSU-1)</name>
    <dbReference type="NCBI Taxonomy" id="203123"/>
    <lineage>
        <taxon>Bacteria</taxon>
        <taxon>Bacillati</taxon>
        <taxon>Bacillota</taxon>
        <taxon>Bacilli</taxon>
        <taxon>Lactobacillales</taxon>
        <taxon>Lactobacillaceae</taxon>
        <taxon>Oenococcus</taxon>
    </lineage>
</organism>
<sequence>MFFGILKAIILGIVEGITEFLPISSTGHLIIVDQFVKISSNKAFTTTFEYVIQLGAIIAVVLLYWKRLWPFGGGKTEKQRFNIWATWVKVVVGVIPSVIIGFLLNDWMDKHLMNWLVVSIALIVYGIAFIFIENYQKNRRPRVRTINHLTLADVLKIGFFQVLSIVPGTSRSGATILGGISIGVSREAAAEFSFFLSIPTMLGVSVLKIGSYLHSHGMFSGEQIVILLVGMFVSFVVAYVVIKWLLRFIQTHDFKAFGWYRIILGVLVIALGAIGIID</sequence>
<accession>Q04FK3</accession>
<evidence type="ECO:0000255" key="1">
    <source>
        <dbReference type="HAMAP-Rule" id="MF_01006"/>
    </source>
</evidence>